<feature type="chain" id="PRO_1000088516" description="G/U mismatch-specific DNA glycosylase">
    <location>
        <begin position="1"/>
        <end position="168"/>
    </location>
</feature>
<name>MUG_SALAR</name>
<comment type="function">
    <text evidence="1">Excises ethenocytosine and uracil, which can arise by alkylation or deamination of cytosine, respectively, from the corresponding mispairs with guanine in ds-DNA. It is capable of hydrolyzing the carbon-nitrogen bond between the sugar-phosphate backbone of the DNA and the mispaired base. The complementary strand guanine functions in substrate recognition. Required for DNA damage lesion repair in stationary-phase cells.</text>
</comment>
<comment type="catalytic activity">
    <reaction evidence="1">
        <text>Specifically hydrolyzes mismatched double-stranded DNA and polynucleotides, releasing free uracil.</text>
        <dbReference type="EC" id="3.2.2.28"/>
    </reaction>
</comment>
<comment type="subunit">
    <text evidence="1">Binds DNA as a monomer.</text>
</comment>
<comment type="subcellular location">
    <subcellularLocation>
        <location evidence="1">Cytoplasm</location>
    </subcellularLocation>
</comment>
<comment type="similarity">
    <text evidence="1">Belongs to the uracil-DNA glycosylase (UDG) superfamily. TDG/mug family.</text>
</comment>
<proteinExistence type="inferred from homology"/>
<accession>A9MPV1</accession>
<evidence type="ECO:0000255" key="1">
    <source>
        <dbReference type="HAMAP-Rule" id="MF_01956"/>
    </source>
</evidence>
<protein>
    <recommendedName>
        <fullName evidence="1">G/U mismatch-specific DNA glycosylase</fullName>
        <ecNumber evidence="1">3.2.2.28</ecNumber>
    </recommendedName>
    <alternativeName>
        <fullName evidence="1">Double-strand-specific uracil glycosylase</fullName>
    </alternativeName>
    <alternativeName>
        <fullName evidence="1">Mismatch-specific uracil DNA-glycosylase</fullName>
        <shortName evidence="1">MUG</shortName>
    </alternativeName>
</protein>
<organism>
    <name type="scientific">Salmonella arizonae (strain ATCC BAA-731 / CDC346-86 / RSK2980)</name>
    <dbReference type="NCBI Taxonomy" id="41514"/>
    <lineage>
        <taxon>Bacteria</taxon>
        <taxon>Pseudomonadati</taxon>
        <taxon>Pseudomonadota</taxon>
        <taxon>Gammaproteobacteria</taxon>
        <taxon>Enterobacterales</taxon>
        <taxon>Enterobacteriaceae</taxon>
        <taxon>Salmonella</taxon>
    </lineage>
</organism>
<dbReference type="EC" id="3.2.2.28" evidence="1"/>
<dbReference type="EMBL" id="CP000880">
    <property type="protein sequence ID" value="ABX24194.1"/>
    <property type="molecule type" value="Genomic_DNA"/>
</dbReference>
<dbReference type="SMR" id="A9MPV1"/>
<dbReference type="STRING" id="41514.SARI_04417"/>
<dbReference type="KEGG" id="ses:SARI_04417"/>
<dbReference type="HOGENOM" id="CLU_042829_3_1_6"/>
<dbReference type="Proteomes" id="UP000002084">
    <property type="component" value="Chromosome"/>
</dbReference>
<dbReference type="GO" id="GO:0005737">
    <property type="term" value="C:cytoplasm"/>
    <property type="evidence" value="ECO:0007669"/>
    <property type="project" value="UniProtKB-SubCell"/>
</dbReference>
<dbReference type="GO" id="GO:0003677">
    <property type="term" value="F:DNA binding"/>
    <property type="evidence" value="ECO:0007669"/>
    <property type="project" value="UniProtKB-KW"/>
</dbReference>
<dbReference type="GO" id="GO:0008263">
    <property type="term" value="F:pyrimidine-specific mismatch base pair DNA N-glycosylase activity"/>
    <property type="evidence" value="ECO:0007669"/>
    <property type="project" value="UniProtKB-UniRule"/>
</dbReference>
<dbReference type="GO" id="GO:0004844">
    <property type="term" value="F:uracil DNA N-glycosylase activity"/>
    <property type="evidence" value="ECO:0007669"/>
    <property type="project" value="TreeGrafter"/>
</dbReference>
<dbReference type="GO" id="GO:0006285">
    <property type="term" value="P:base-excision repair, AP site formation"/>
    <property type="evidence" value="ECO:0007669"/>
    <property type="project" value="UniProtKB-UniRule"/>
</dbReference>
<dbReference type="CDD" id="cd10028">
    <property type="entry name" value="UDG-F2_TDG_MUG"/>
    <property type="match status" value="1"/>
</dbReference>
<dbReference type="Gene3D" id="3.40.470.10">
    <property type="entry name" value="Uracil-DNA glycosylase-like domain"/>
    <property type="match status" value="1"/>
</dbReference>
<dbReference type="HAMAP" id="MF_01956">
    <property type="entry name" value="MUG"/>
    <property type="match status" value="1"/>
</dbReference>
<dbReference type="InterPro" id="IPR015637">
    <property type="entry name" value="MUG/TDG"/>
</dbReference>
<dbReference type="InterPro" id="IPR023502">
    <property type="entry name" value="MUG_bact"/>
</dbReference>
<dbReference type="InterPro" id="IPR005122">
    <property type="entry name" value="Uracil-DNA_glycosylase-like"/>
</dbReference>
<dbReference type="InterPro" id="IPR036895">
    <property type="entry name" value="Uracil-DNA_glycosylase-like_sf"/>
</dbReference>
<dbReference type="NCBIfam" id="NF007570">
    <property type="entry name" value="PRK10201.1"/>
    <property type="match status" value="1"/>
</dbReference>
<dbReference type="PANTHER" id="PTHR12159">
    <property type="entry name" value="G/T AND G/U MISMATCH-SPECIFIC DNA GLYCOSYLASE"/>
    <property type="match status" value="1"/>
</dbReference>
<dbReference type="PANTHER" id="PTHR12159:SF9">
    <property type="entry name" value="G_T MISMATCH-SPECIFIC THYMINE DNA GLYCOSYLASE"/>
    <property type="match status" value="1"/>
</dbReference>
<dbReference type="Pfam" id="PF03167">
    <property type="entry name" value="UDG"/>
    <property type="match status" value="1"/>
</dbReference>
<dbReference type="SUPFAM" id="SSF52141">
    <property type="entry name" value="Uracil-DNA glycosylase-like"/>
    <property type="match status" value="1"/>
</dbReference>
<sequence length="168" mass="18650">MVKDILAPGLRVVFCGINPGLSSANTGFPFAHPANRFWKVIHLAGFTDRQLKPEEAEKLLDFRCGVTKLVDRPTVQATEVKLHELRSGGRNLIEKIEDYQPAALAVLGKQAFEQGFSQRGIAWGKQKIAIGATMVWVLPNPSGLNRIKTEKLVEAYRELDQALIMRGL</sequence>
<reference key="1">
    <citation type="submission" date="2007-11" db="EMBL/GenBank/DDBJ databases">
        <authorList>
            <consortium name="The Salmonella enterica serovar Arizonae Genome Sequencing Project"/>
            <person name="McClelland M."/>
            <person name="Sanderson E.K."/>
            <person name="Porwollik S."/>
            <person name="Spieth J."/>
            <person name="Clifton W.S."/>
            <person name="Fulton R."/>
            <person name="Chunyan W."/>
            <person name="Wollam A."/>
            <person name="Shah N."/>
            <person name="Pepin K."/>
            <person name="Bhonagiri V."/>
            <person name="Nash W."/>
            <person name="Johnson M."/>
            <person name="Thiruvilangam P."/>
            <person name="Wilson R."/>
        </authorList>
    </citation>
    <scope>NUCLEOTIDE SEQUENCE [LARGE SCALE GENOMIC DNA]</scope>
    <source>
        <strain>ATCC BAA-731 / CDC346-86 / RSK2980</strain>
    </source>
</reference>
<gene>
    <name evidence="1" type="primary">mug</name>
    <name type="ordered locus">SARI_04417</name>
</gene>
<keyword id="KW-0963">Cytoplasm</keyword>
<keyword id="KW-0227">DNA damage</keyword>
<keyword id="KW-0228">DNA excision</keyword>
<keyword id="KW-0234">DNA repair</keyword>
<keyword id="KW-0238">DNA-binding</keyword>
<keyword id="KW-0378">Hydrolase</keyword>
<keyword id="KW-1185">Reference proteome</keyword>